<reference key="1">
    <citation type="journal article" date="2008" name="J. Bacteriol.">
        <title>Insights into the environmental resistance gene pool from the genome sequence of the multidrug-resistant environmental isolate Escherichia coli SMS-3-5.</title>
        <authorList>
            <person name="Fricke W.F."/>
            <person name="Wright M.S."/>
            <person name="Lindell A.H."/>
            <person name="Harkins D.M."/>
            <person name="Baker-Austin C."/>
            <person name="Ravel J."/>
            <person name="Stepanauskas R."/>
        </authorList>
    </citation>
    <scope>NUCLEOTIDE SEQUENCE [LARGE SCALE GENOMIC DNA]</scope>
    <source>
        <strain>SMS-3-5 / SECEC</strain>
    </source>
</reference>
<dbReference type="EC" id="4.1.1.31" evidence="1"/>
<dbReference type="EMBL" id="CP000970">
    <property type="protein sequence ID" value="ACB18937.1"/>
    <property type="molecule type" value="Genomic_DNA"/>
</dbReference>
<dbReference type="RefSeq" id="WP_001005578.1">
    <property type="nucleotide sequence ID" value="NC_010498.1"/>
</dbReference>
<dbReference type="SMR" id="B1LNR6"/>
<dbReference type="KEGG" id="ecm:EcSMS35_4403"/>
<dbReference type="HOGENOM" id="CLU_006557_2_0_6"/>
<dbReference type="Proteomes" id="UP000007011">
    <property type="component" value="Chromosome"/>
</dbReference>
<dbReference type="GO" id="GO:0005829">
    <property type="term" value="C:cytosol"/>
    <property type="evidence" value="ECO:0007669"/>
    <property type="project" value="TreeGrafter"/>
</dbReference>
<dbReference type="GO" id="GO:0000287">
    <property type="term" value="F:magnesium ion binding"/>
    <property type="evidence" value="ECO:0007669"/>
    <property type="project" value="UniProtKB-UniRule"/>
</dbReference>
<dbReference type="GO" id="GO:0008964">
    <property type="term" value="F:phosphoenolpyruvate carboxylase activity"/>
    <property type="evidence" value="ECO:0007669"/>
    <property type="project" value="UniProtKB-UniRule"/>
</dbReference>
<dbReference type="GO" id="GO:0015977">
    <property type="term" value="P:carbon fixation"/>
    <property type="evidence" value="ECO:0007669"/>
    <property type="project" value="UniProtKB-UniRule"/>
</dbReference>
<dbReference type="GO" id="GO:0006107">
    <property type="term" value="P:oxaloacetate metabolic process"/>
    <property type="evidence" value="ECO:0007669"/>
    <property type="project" value="UniProtKB-UniRule"/>
</dbReference>
<dbReference type="GO" id="GO:0006099">
    <property type="term" value="P:tricarboxylic acid cycle"/>
    <property type="evidence" value="ECO:0007669"/>
    <property type="project" value="InterPro"/>
</dbReference>
<dbReference type="FunFam" id="1.20.1440.90:FF:000002">
    <property type="entry name" value="Phosphoenolpyruvate carboxylase"/>
    <property type="match status" value="1"/>
</dbReference>
<dbReference type="Gene3D" id="1.20.1440.90">
    <property type="entry name" value="Phosphoenolpyruvate/pyruvate domain"/>
    <property type="match status" value="1"/>
</dbReference>
<dbReference type="HAMAP" id="MF_00595">
    <property type="entry name" value="PEPcase_type1"/>
    <property type="match status" value="1"/>
</dbReference>
<dbReference type="InterPro" id="IPR021135">
    <property type="entry name" value="PEP_COase"/>
</dbReference>
<dbReference type="InterPro" id="IPR022805">
    <property type="entry name" value="PEP_COase_bac/pln-type"/>
</dbReference>
<dbReference type="InterPro" id="IPR018129">
    <property type="entry name" value="PEP_COase_Lys_AS"/>
</dbReference>
<dbReference type="InterPro" id="IPR033129">
    <property type="entry name" value="PEPCASE_His_AS"/>
</dbReference>
<dbReference type="InterPro" id="IPR015813">
    <property type="entry name" value="Pyrv/PenolPyrv_kinase-like_dom"/>
</dbReference>
<dbReference type="NCBIfam" id="NF000584">
    <property type="entry name" value="PRK00009.1"/>
    <property type="match status" value="1"/>
</dbReference>
<dbReference type="PANTHER" id="PTHR30523">
    <property type="entry name" value="PHOSPHOENOLPYRUVATE CARBOXYLASE"/>
    <property type="match status" value="1"/>
</dbReference>
<dbReference type="PANTHER" id="PTHR30523:SF6">
    <property type="entry name" value="PHOSPHOENOLPYRUVATE CARBOXYLASE"/>
    <property type="match status" value="1"/>
</dbReference>
<dbReference type="Pfam" id="PF00311">
    <property type="entry name" value="PEPcase"/>
    <property type="match status" value="1"/>
</dbReference>
<dbReference type="PRINTS" id="PR00150">
    <property type="entry name" value="PEPCARBXLASE"/>
</dbReference>
<dbReference type="SUPFAM" id="SSF51621">
    <property type="entry name" value="Phosphoenolpyruvate/pyruvate domain"/>
    <property type="match status" value="1"/>
</dbReference>
<dbReference type="PROSITE" id="PS00781">
    <property type="entry name" value="PEPCASE_1"/>
    <property type="match status" value="1"/>
</dbReference>
<dbReference type="PROSITE" id="PS00393">
    <property type="entry name" value="PEPCASE_2"/>
    <property type="match status" value="1"/>
</dbReference>
<gene>
    <name evidence="1" type="primary">ppc</name>
    <name type="ordered locus">EcSMS35_4403</name>
</gene>
<sequence length="883" mass="99086">MNEQYSALRSNVSMLGKVLGETIKDALGEHILERVETIRKLSKSSRAGNDANRQELLTTLQNLSNDELLPVARAFSQFLNLANTAEQYHSISPKGEAASNPEVIARTLRKLKNQPELSEDTIKKAVESLSLELVLTAHPTEITRRTLIHKMVEVNACLKQLDNKDIADYEHNQLMRRLRQLIAQSWHTDEIRKLRPSPVDEAKWGFAVVENSLWQGVPNYLRELNEQLEENLGYKLPVEFVPVRFTSWMGGDRDGNPNVTADITRHVLLLSRWKATDLFLKDIQVLVSELSMVEATPELLALVGEEGAAEPYRYLMKNLRSRLMATQAWLEARLKGEELPKPEGLLTQNEELWEPLYACYQSLQACGMGIIANGDLLDTLRRVKCFGVPLVRIDIRQESTRHTEALGELTRYLGIGDYESWSEADKQAFLIRELNSKRPLLPRNWQPSAETREVLDTCQVIAEAPQGSIAAYVISMAKTPSDVLAVHLLLKEAGIGFAMPVAPLFETLDDLNNANDVMTQLLNIDWYRGLIQGKQMVMIGYSDSAKDAGVMAASWAQYQAQDALIKTCEKAGIELTLFHGRGGSIGRGGAPAHAALLSQPPGSLKGGLRVTEQGEMIRFKYGLPEITVSSLSLYTGAILEANLLPPPEPKESWRRIMDELSVISCDLYRGYVRENKDFVPYFRSATPEQELGKLPLGSRPAKRRPTGGVESLRAIPWIFAWTQNRLMLPAWLGAGTALQKVVEDGKQSELEAMCRDWPFFSTRLGMLEMVFAKADLWLAEYYDQRLVDKALWPLGKELRNLQEEDIKVVLAIANDSHLMADLPWIAESIQLRNIYTDPLNVLQAELLHRSRQAEKEGHEPDPRVEQALMVTIAGIAAGMRNTG</sequence>
<accession>B1LNR6</accession>
<organism>
    <name type="scientific">Escherichia coli (strain SMS-3-5 / SECEC)</name>
    <dbReference type="NCBI Taxonomy" id="439855"/>
    <lineage>
        <taxon>Bacteria</taxon>
        <taxon>Pseudomonadati</taxon>
        <taxon>Pseudomonadota</taxon>
        <taxon>Gammaproteobacteria</taxon>
        <taxon>Enterobacterales</taxon>
        <taxon>Enterobacteriaceae</taxon>
        <taxon>Escherichia</taxon>
    </lineage>
</organism>
<evidence type="ECO:0000255" key="1">
    <source>
        <dbReference type="HAMAP-Rule" id="MF_00595"/>
    </source>
</evidence>
<proteinExistence type="inferred from homology"/>
<keyword id="KW-0120">Carbon dioxide fixation</keyword>
<keyword id="KW-0456">Lyase</keyword>
<keyword id="KW-0460">Magnesium</keyword>
<name>CAPP_ECOSM</name>
<comment type="function">
    <text evidence="1">Forms oxaloacetate, a four-carbon dicarboxylic acid source for the tricarboxylic acid cycle.</text>
</comment>
<comment type="catalytic activity">
    <reaction evidence="1">
        <text>oxaloacetate + phosphate = phosphoenolpyruvate + hydrogencarbonate</text>
        <dbReference type="Rhea" id="RHEA:28370"/>
        <dbReference type="ChEBI" id="CHEBI:16452"/>
        <dbReference type="ChEBI" id="CHEBI:17544"/>
        <dbReference type="ChEBI" id="CHEBI:43474"/>
        <dbReference type="ChEBI" id="CHEBI:58702"/>
        <dbReference type="EC" id="4.1.1.31"/>
    </reaction>
</comment>
<comment type="cofactor">
    <cofactor evidence="1">
        <name>Mg(2+)</name>
        <dbReference type="ChEBI" id="CHEBI:18420"/>
    </cofactor>
</comment>
<comment type="similarity">
    <text evidence="1">Belongs to the PEPCase type 1 family.</text>
</comment>
<protein>
    <recommendedName>
        <fullName evidence="1">Phosphoenolpyruvate carboxylase</fullName>
        <shortName evidence="1">PEPC</shortName>
        <shortName evidence="1">PEPCase</shortName>
        <ecNumber evidence="1">4.1.1.31</ecNumber>
    </recommendedName>
</protein>
<feature type="chain" id="PRO_1000129832" description="Phosphoenolpyruvate carboxylase">
    <location>
        <begin position="1"/>
        <end position="883"/>
    </location>
</feature>
<feature type="active site" evidence="1">
    <location>
        <position position="138"/>
    </location>
</feature>
<feature type="active site" evidence="1">
    <location>
        <position position="546"/>
    </location>
</feature>